<protein>
    <recommendedName>
        <fullName>Mitochondrial inner membrane protein OXA1</fullName>
    </recommendedName>
    <alternativeName>
        <fullName>Oxidase assembly 1 protein</fullName>
        <shortName>AtOXA1</shortName>
    </alternativeName>
</protein>
<reference key="1">
    <citation type="journal article" date="1997" name="Plant J.">
        <title>Functional complementation of an oxa1- yeast mutation identifies an Arabidopsis thaliana cDNA involved in the assembly of respiratory complexes.</title>
        <authorList>
            <person name="Hamel P."/>
            <person name="Sakamoto W."/>
            <person name="Wintz H."/>
            <person name="Dujardin G."/>
        </authorList>
    </citation>
    <scope>NUCLEOTIDE SEQUENCE [MRNA]</scope>
    <scope>FUNCTION</scope>
    <scope>TISSUE SPECIFICITY</scope>
    <source>
        <strain>cv. Columbia</strain>
        <tissue>Seedling</tissue>
    </source>
</reference>
<reference key="2">
    <citation type="journal article" date="2000" name="Plant Cell Physiol.">
        <title>Mitochondrial localization of AtOXA1, an Arabidopsis homologue of yeast Oxa1p involved in the insertion and assembly of protein complexes in mitochondrial inner membrane.</title>
        <authorList>
            <person name="Sakamoto W."/>
            <person name="Spielewoy N."/>
            <person name="Bonnard G."/>
            <person name="Murata M."/>
            <person name="Wintz H."/>
        </authorList>
    </citation>
    <scope>NUCLEOTIDE SEQUENCE [GENOMIC DNA]</scope>
    <scope>SUBCELLULAR LOCATION</scope>
    <source>
        <strain>cv. Columbia</strain>
    </source>
</reference>
<reference key="3">
    <citation type="journal article" date="1998" name="DNA Res.">
        <title>Structural analysis of Arabidopsis thaliana chromosome 5. VII. Sequence features of the regions of 1,013,767 bp covered by sixteen physically assigned P1 and TAC clones.</title>
        <authorList>
            <person name="Nakamura Y."/>
            <person name="Sato S."/>
            <person name="Asamizu E."/>
            <person name="Kaneko T."/>
            <person name="Kotani H."/>
            <person name="Miyajima N."/>
            <person name="Tabata S."/>
        </authorList>
    </citation>
    <scope>NUCLEOTIDE SEQUENCE [LARGE SCALE GENOMIC DNA]</scope>
    <source>
        <strain>cv. Columbia</strain>
    </source>
</reference>
<reference key="4">
    <citation type="journal article" date="2017" name="Plant J.">
        <title>Araport11: a complete reannotation of the Arabidopsis thaliana reference genome.</title>
        <authorList>
            <person name="Cheng C.Y."/>
            <person name="Krishnakumar V."/>
            <person name="Chan A.P."/>
            <person name="Thibaud-Nissen F."/>
            <person name="Schobel S."/>
            <person name="Town C.D."/>
        </authorList>
    </citation>
    <scope>GENOME REANNOTATION</scope>
    <source>
        <strain>cv. Columbia</strain>
    </source>
</reference>
<reference key="5">
    <citation type="journal article" date="2003" name="Science">
        <title>Empirical analysis of transcriptional activity in the Arabidopsis genome.</title>
        <authorList>
            <person name="Yamada K."/>
            <person name="Lim J."/>
            <person name="Dale J.M."/>
            <person name="Chen H."/>
            <person name="Shinn P."/>
            <person name="Palm C.J."/>
            <person name="Southwick A.M."/>
            <person name="Wu H.C."/>
            <person name="Kim C.J."/>
            <person name="Nguyen M."/>
            <person name="Pham P.K."/>
            <person name="Cheuk R.F."/>
            <person name="Karlin-Newmann G."/>
            <person name="Liu S.X."/>
            <person name="Lam B."/>
            <person name="Sakano H."/>
            <person name="Wu T."/>
            <person name="Yu G."/>
            <person name="Miranda M."/>
            <person name="Quach H.L."/>
            <person name="Tripp M."/>
            <person name="Chang C.H."/>
            <person name="Lee J.M."/>
            <person name="Toriumi M.J."/>
            <person name="Chan M.M."/>
            <person name="Tang C.C."/>
            <person name="Onodera C.S."/>
            <person name="Deng J.M."/>
            <person name="Akiyama K."/>
            <person name="Ansari Y."/>
            <person name="Arakawa T."/>
            <person name="Banh J."/>
            <person name="Banno F."/>
            <person name="Bowser L."/>
            <person name="Brooks S.Y."/>
            <person name="Carninci P."/>
            <person name="Chao Q."/>
            <person name="Choy N."/>
            <person name="Enju A."/>
            <person name="Goldsmith A.D."/>
            <person name="Gurjal M."/>
            <person name="Hansen N.F."/>
            <person name="Hayashizaki Y."/>
            <person name="Johnson-Hopson C."/>
            <person name="Hsuan V.W."/>
            <person name="Iida K."/>
            <person name="Karnes M."/>
            <person name="Khan S."/>
            <person name="Koesema E."/>
            <person name="Ishida J."/>
            <person name="Jiang P.X."/>
            <person name="Jones T."/>
            <person name="Kawai J."/>
            <person name="Kamiya A."/>
            <person name="Meyers C."/>
            <person name="Nakajima M."/>
            <person name="Narusaka M."/>
            <person name="Seki M."/>
            <person name="Sakurai T."/>
            <person name="Satou M."/>
            <person name="Tamse R."/>
            <person name="Vaysberg M."/>
            <person name="Wallender E.K."/>
            <person name="Wong C."/>
            <person name="Yamamura Y."/>
            <person name="Yuan S."/>
            <person name="Shinozaki K."/>
            <person name="Davis R.W."/>
            <person name="Theologis A."/>
            <person name="Ecker J.R."/>
        </authorList>
    </citation>
    <scope>NUCLEOTIDE SEQUENCE [LARGE SCALE MRNA]</scope>
    <source>
        <strain>cv. Columbia</strain>
    </source>
</reference>
<reference key="6">
    <citation type="submission" date="2002-03" db="EMBL/GenBank/DDBJ databases">
        <title>Full-length cDNA from Arabidopsis thaliana.</title>
        <authorList>
            <person name="Brover V.V."/>
            <person name="Troukhan M.E."/>
            <person name="Alexandrov N.A."/>
            <person name="Lu Y.-P."/>
            <person name="Flavell R.B."/>
            <person name="Feldmann K.A."/>
        </authorList>
    </citation>
    <scope>NUCLEOTIDE SEQUENCE [LARGE SCALE MRNA]</scope>
</reference>
<reference key="7">
    <citation type="journal article" date="1996" name="Plant J.">
        <title>Further progress towards a catalogue of all Arabidopsis genes: analysis of a set of 5000 non-redundant ESTs.</title>
        <authorList>
            <person name="Cooke R."/>
            <person name="Raynal M."/>
            <person name="Laudie M."/>
            <person name="Grellet F."/>
            <person name="Delseny M."/>
            <person name="Morris P.-C."/>
            <person name="Guerrier D."/>
            <person name="Giraudat J."/>
            <person name="Quigley F."/>
            <person name="Clabault G."/>
            <person name="Li Y.-F."/>
            <person name="Mache R."/>
            <person name="Krivitzky M."/>
            <person name="Gy I.J.-J."/>
            <person name="Kreis M."/>
            <person name="Lecharny A."/>
            <person name="Parmentier Y."/>
            <person name="Marbach J."/>
            <person name="Fleck J."/>
            <person name="Clement B."/>
            <person name="Philipps G."/>
            <person name="Herve C."/>
            <person name="Bardet C."/>
            <person name="Tremousaygue D."/>
            <person name="Lescure B."/>
            <person name="Lacomme C."/>
            <person name="Roby D."/>
            <person name="Jourjon M.-F."/>
            <person name="Chabrier P."/>
            <person name="Charpenteau J.-L."/>
            <person name="Desprez T."/>
            <person name="Amselem J."/>
            <person name="Chiapello H."/>
            <person name="Hoefte H."/>
        </authorList>
    </citation>
    <scope>NUCLEOTIDE SEQUENCE [LARGE SCALE MRNA] OF 268-367 AND 386-429</scope>
    <source>
        <strain>cv. Columbia</strain>
        <tissue>Shoot</tissue>
    </source>
</reference>
<gene>
    <name type="primary">OXA1</name>
    <name type="synonym">ATOXA1</name>
    <name type="ordered locus">At5g62050</name>
    <name type="ORF">MTG10.19</name>
</gene>
<comment type="function">
    <text evidence="4">Required for the insertion of integral membrane proteins into the mitochondrial inner membrane. Essential for activity and assembly of cytochrome c oxidase.</text>
</comment>
<comment type="subcellular location">
    <subcellularLocation>
        <location evidence="3">Mitochondrion inner membrane</location>
        <topology evidence="3">Multi-pass membrane protein</topology>
    </subcellularLocation>
</comment>
<comment type="tissue specificity">
    <text evidence="4">Expressed in stem, leaf and flower.</text>
</comment>
<comment type="similarity">
    <text evidence="5">Belongs to the OXA1/ALB3/YidC (TC 2.A.9.2) family.</text>
</comment>
<feature type="transit peptide" description="Mitochondrion" evidence="1">
    <location>
        <begin position="1"/>
        <end status="unknown"/>
    </location>
</feature>
<feature type="chain" id="PRO_0000020363" description="Mitochondrial inner membrane protein OXA1">
    <location>
        <begin status="unknown"/>
        <end position="429"/>
    </location>
</feature>
<feature type="topological domain" description="Mitochondrial matrix" evidence="1">
    <location>
        <begin status="unknown"/>
        <end position="116"/>
    </location>
</feature>
<feature type="transmembrane region" description="Helical" evidence="1">
    <location>
        <begin position="117"/>
        <end position="137"/>
    </location>
</feature>
<feature type="topological domain" description="Mitochondrial intermembrane" evidence="1">
    <location>
        <begin position="138"/>
        <end position="142"/>
    </location>
</feature>
<feature type="transmembrane region" description="Helical" evidence="1">
    <location>
        <begin position="143"/>
        <end position="163"/>
    </location>
</feature>
<feature type="topological domain" description="Mitochondrial matrix" evidence="1">
    <location>
        <begin position="164"/>
        <end position="223"/>
    </location>
</feature>
<feature type="transmembrane region" description="Helical" evidence="1">
    <location>
        <begin position="224"/>
        <end position="244"/>
    </location>
</feature>
<feature type="topological domain" description="Mitochondrial intermembrane" evidence="1">
    <location>
        <begin position="245"/>
        <end position="269"/>
    </location>
</feature>
<feature type="transmembrane region" description="Helical" evidence="1">
    <location>
        <begin position="270"/>
        <end position="290"/>
    </location>
</feature>
<feature type="topological domain" description="Mitochondrial matrix" evidence="1">
    <location>
        <begin position="291"/>
        <end position="309"/>
    </location>
</feature>
<feature type="transmembrane region" description="Helical" evidence="1">
    <location>
        <begin position="310"/>
        <end position="330"/>
    </location>
</feature>
<feature type="topological domain" description="Mitochondrial intermembrane" evidence="1">
    <location>
        <begin position="331"/>
        <end position="429"/>
    </location>
</feature>
<feature type="region of interest" description="Disordered" evidence="2">
    <location>
        <begin position="378"/>
        <end position="429"/>
    </location>
</feature>
<feature type="compositionally biased region" description="Basic residues" evidence="2">
    <location>
        <begin position="419"/>
        <end position="429"/>
    </location>
</feature>
<dbReference type="EMBL" id="Y11871">
    <property type="protein sequence ID" value="CAA72619.1"/>
    <property type="molecule type" value="mRNA"/>
</dbReference>
<dbReference type="EMBL" id="AB035892">
    <property type="protein sequence ID" value="BAA88473.1"/>
    <property type="molecule type" value="Genomic_DNA"/>
</dbReference>
<dbReference type="EMBL" id="AB016880">
    <property type="protein sequence ID" value="BAB10166.1"/>
    <property type="molecule type" value="Genomic_DNA"/>
</dbReference>
<dbReference type="EMBL" id="CP002688">
    <property type="protein sequence ID" value="AED97555.1"/>
    <property type="molecule type" value="Genomic_DNA"/>
</dbReference>
<dbReference type="EMBL" id="AY140006">
    <property type="protein sequence ID" value="AAM98148.1"/>
    <property type="molecule type" value="mRNA"/>
</dbReference>
<dbReference type="EMBL" id="BT006574">
    <property type="protein sequence ID" value="AAP31918.1"/>
    <property type="molecule type" value="mRNA"/>
</dbReference>
<dbReference type="EMBL" id="AY088837">
    <property type="protein sequence ID" value="AAM67144.1"/>
    <property type="molecule type" value="mRNA"/>
</dbReference>
<dbReference type="EMBL" id="Z29024">
    <property type="protein sequence ID" value="CAA82287.1"/>
    <property type="molecule type" value="mRNA"/>
</dbReference>
<dbReference type="EMBL" id="Z29025">
    <property type="protein sequence ID" value="CAA82288.1"/>
    <property type="molecule type" value="mRNA"/>
</dbReference>
<dbReference type="RefSeq" id="NP_201011.1">
    <property type="nucleotide sequence ID" value="NM_125598.4"/>
</dbReference>
<dbReference type="SMR" id="Q42191"/>
<dbReference type="FunCoup" id="Q42191">
    <property type="interactions" value="3926"/>
</dbReference>
<dbReference type="STRING" id="3702.Q42191"/>
<dbReference type="iPTMnet" id="Q42191"/>
<dbReference type="PaxDb" id="3702-AT5G62050.1"/>
<dbReference type="ProteomicsDB" id="248855"/>
<dbReference type="EnsemblPlants" id="AT5G62050.1">
    <property type="protein sequence ID" value="AT5G62050.1"/>
    <property type="gene ID" value="AT5G62050"/>
</dbReference>
<dbReference type="GeneID" id="836325"/>
<dbReference type="Gramene" id="AT5G62050.1">
    <property type="protein sequence ID" value="AT5G62050.1"/>
    <property type="gene ID" value="AT5G62050"/>
</dbReference>
<dbReference type="KEGG" id="ath:AT5G62050"/>
<dbReference type="Araport" id="AT5G62050"/>
<dbReference type="TAIR" id="AT5G62050">
    <property type="gene designation" value="OXA1"/>
</dbReference>
<dbReference type="eggNOG" id="KOG1239">
    <property type="taxonomic scope" value="Eukaryota"/>
</dbReference>
<dbReference type="HOGENOM" id="CLU_029282_4_0_1"/>
<dbReference type="InParanoid" id="Q42191"/>
<dbReference type="OMA" id="AMTQDHT"/>
<dbReference type="PhylomeDB" id="Q42191"/>
<dbReference type="PRO" id="PR:Q42191"/>
<dbReference type="Proteomes" id="UP000006548">
    <property type="component" value="Chromosome 5"/>
</dbReference>
<dbReference type="ExpressionAtlas" id="Q42191">
    <property type="expression patterns" value="baseline and differential"/>
</dbReference>
<dbReference type="GO" id="GO:0005743">
    <property type="term" value="C:mitochondrial inner membrane"/>
    <property type="evidence" value="ECO:0000314"/>
    <property type="project" value="TAIR"/>
</dbReference>
<dbReference type="GO" id="GO:0005739">
    <property type="term" value="C:mitochondrion"/>
    <property type="evidence" value="ECO:0007005"/>
    <property type="project" value="TAIR"/>
</dbReference>
<dbReference type="GO" id="GO:0032977">
    <property type="term" value="F:membrane insertase activity"/>
    <property type="evidence" value="ECO:0007669"/>
    <property type="project" value="InterPro"/>
</dbReference>
<dbReference type="CDD" id="cd19751">
    <property type="entry name" value="5TM_YidC_Oxa1_Alb3"/>
    <property type="match status" value="1"/>
</dbReference>
<dbReference type="InterPro" id="IPR001708">
    <property type="entry name" value="YidC/ALB3/OXA1/COX18"/>
</dbReference>
<dbReference type="InterPro" id="IPR028055">
    <property type="entry name" value="YidC/Oxa/ALB_C"/>
</dbReference>
<dbReference type="NCBIfam" id="TIGR03592">
    <property type="entry name" value="yidC_oxa1_cterm"/>
    <property type="match status" value="1"/>
</dbReference>
<dbReference type="PANTHER" id="PTHR12428:SF67">
    <property type="entry name" value="MITOCHONDRIAL INNER MEMBRANE PROTEIN OXA1"/>
    <property type="match status" value="1"/>
</dbReference>
<dbReference type="PANTHER" id="PTHR12428">
    <property type="entry name" value="OXA1"/>
    <property type="match status" value="1"/>
</dbReference>
<dbReference type="Pfam" id="PF02096">
    <property type="entry name" value="60KD_IMP"/>
    <property type="match status" value="1"/>
</dbReference>
<sequence length="429" mass="47860">MAFRQTLSIRSRLFARRNQPVYHIIPRESDHERDSFCQETSQRSYHSFLHQRSVNNSDFSKVSGGSLHLPLAPTSGFAFYRYMSSAPGVGSEKIGVMSDIAEVITDSTLQDVPAQAAAAVSEVTLAAADSFFPIAALQQCIDMVHTFTGFEWWASIVVATILIRSSTVPLLIKQMKDTTKLALMRPRLESIREEMQNKGMDSVTMAEGQKKMKNLFKEYGVTPFTPMKGMFIQGPLFICFFLAIRNMAEKVPSFQTGGALWFTDLTTPDSLYILPVITGLTFLITVECNAQEGMEGNPMAGTVKTVCRVFALLTVPMTMSFPQAIFCYWITSNLFSLMYGLVIKRPQVKKMLRIPDLPPPPPGQQPSFDLFSALKKMKAMTQDHTQNQIEPPSPVNPRLSSTSLSPVSKRLKALESQVKGRKKNSSKKK</sequence>
<evidence type="ECO:0000255" key="1"/>
<evidence type="ECO:0000256" key="2">
    <source>
        <dbReference type="SAM" id="MobiDB-lite"/>
    </source>
</evidence>
<evidence type="ECO:0000269" key="3">
    <source>
    </source>
</evidence>
<evidence type="ECO:0000269" key="4">
    <source>
    </source>
</evidence>
<evidence type="ECO:0000305" key="5"/>
<proteinExistence type="evidence at transcript level"/>
<keyword id="KW-0472">Membrane</keyword>
<keyword id="KW-0496">Mitochondrion</keyword>
<keyword id="KW-0999">Mitochondrion inner membrane</keyword>
<keyword id="KW-1185">Reference proteome</keyword>
<keyword id="KW-0809">Transit peptide</keyword>
<keyword id="KW-0812">Transmembrane</keyword>
<keyword id="KW-1133">Transmembrane helix</keyword>
<name>OXA1_ARATH</name>
<accession>Q42191</accession>
<accession>Q42190</accession>
<organism>
    <name type="scientific">Arabidopsis thaliana</name>
    <name type="common">Mouse-ear cress</name>
    <dbReference type="NCBI Taxonomy" id="3702"/>
    <lineage>
        <taxon>Eukaryota</taxon>
        <taxon>Viridiplantae</taxon>
        <taxon>Streptophyta</taxon>
        <taxon>Embryophyta</taxon>
        <taxon>Tracheophyta</taxon>
        <taxon>Spermatophyta</taxon>
        <taxon>Magnoliopsida</taxon>
        <taxon>eudicotyledons</taxon>
        <taxon>Gunneridae</taxon>
        <taxon>Pentapetalae</taxon>
        <taxon>rosids</taxon>
        <taxon>malvids</taxon>
        <taxon>Brassicales</taxon>
        <taxon>Brassicaceae</taxon>
        <taxon>Camelineae</taxon>
        <taxon>Arabidopsis</taxon>
    </lineage>
</organism>